<name>RL14_ERYLH</name>
<comment type="function">
    <text evidence="1">Binds to 23S rRNA. Forms part of two intersubunit bridges in the 70S ribosome.</text>
</comment>
<comment type="subunit">
    <text evidence="1">Part of the 50S ribosomal subunit. Forms a cluster with proteins L3 and L19. In the 70S ribosome, L14 and L19 interact and together make contacts with the 16S rRNA in bridges B5 and B8.</text>
</comment>
<comment type="similarity">
    <text evidence="1">Belongs to the universal ribosomal protein uL14 family.</text>
</comment>
<feature type="chain" id="PRO_1000055579" description="Large ribosomal subunit protein uL14">
    <location>
        <begin position="1"/>
        <end position="122"/>
    </location>
</feature>
<dbReference type="EMBL" id="CP000157">
    <property type="protein sequence ID" value="ABC63720.1"/>
    <property type="molecule type" value="Genomic_DNA"/>
</dbReference>
<dbReference type="RefSeq" id="WP_011414552.1">
    <property type="nucleotide sequence ID" value="NC_007722.1"/>
</dbReference>
<dbReference type="SMR" id="Q2N9C1"/>
<dbReference type="STRING" id="314225.ELI_08140"/>
<dbReference type="KEGG" id="eli:ELI_08140"/>
<dbReference type="eggNOG" id="COG0093">
    <property type="taxonomic scope" value="Bacteria"/>
</dbReference>
<dbReference type="HOGENOM" id="CLU_095071_2_1_5"/>
<dbReference type="OrthoDB" id="9806379at2"/>
<dbReference type="Proteomes" id="UP000008808">
    <property type="component" value="Chromosome"/>
</dbReference>
<dbReference type="GO" id="GO:0022625">
    <property type="term" value="C:cytosolic large ribosomal subunit"/>
    <property type="evidence" value="ECO:0007669"/>
    <property type="project" value="TreeGrafter"/>
</dbReference>
<dbReference type="GO" id="GO:0070180">
    <property type="term" value="F:large ribosomal subunit rRNA binding"/>
    <property type="evidence" value="ECO:0007669"/>
    <property type="project" value="TreeGrafter"/>
</dbReference>
<dbReference type="GO" id="GO:0003735">
    <property type="term" value="F:structural constituent of ribosome"/>
    <property type="evidence" value="ECO:0007669"/>
    <property type="project" value="InterPro"/>
</dbReference>
<dbReference type="GO" id="GO:0006412">
    <property type="term" value="P:translation"/>
    <property type="evidence" value="ECO:0007669"/>
    <property type="project" value="UniProtKB-UniRule"/>
</dbReference>
<dbReference type="CDD" id="cd00337">
    <property type="entry name" value="Ribosomal_uL14"/>
    <property type="match status" value="1"/>
</dbReference>
<dbReference type="FunFam" id="2.40.150.20:FF:000001">
    <property type="entry name" value="50S ribosomal protein L14"/>
    <property type="match status" value="1"/>
</dbReference>
<dbReference type="Gene3D" id="2.40.150.20">
    <property type="entry name" value="Ribosomal protein L14"/>
    <property type="match status" value="1"/>
</dbReference>
<dbReference type="HAMAP" id="MF_01367">
    <property type="entry name" value="Ribosomal_uL14"/>
    <property type="match status" value="1"/>
</dbReference>
<dbReference type="InterPro" id="IPR000218">
    <property type="entry name" value="Ribosomal_uL14"/>
</dbReference>
<dbReference type="InterPro" id="IPR005745">
    <property type="entry name" value="Ribosomal_uL14_bac-type"/>
</dbReference>
<dbReference type="InterPro" id="IPR019972">
    <property type="entry name" value="Ribosomal_uL14_CS"/>
</dbReference>
<dbReference type="InterPro" id="IPR036853">
    <property type="entry name" value="Ribosomal_uL14_sf"/>
</dbReference>
<dbReference type="NCBIfam" id="TIGR01067">
    <property type="entry name" value="rplN_bact"/>
    <property type="match status" value="1"/>
</dbReference>
<dbReference type="PANTHER" id="PTHR11761">
    <property type="entry name" value="50S/60S RIBOSOMAL PROTEIN L14/L23"/>
    <property type="match status" value="1"/>
</dbReference>
<dbReference type="PANTHER" id="PTHR11761:SF3">
    <property type="entry name" value="LARGE RIBOSOMAL SUBUNIT PROTEIN UL14M"/>
    <property type="match status" value="1"/>
</dbReference>
<dbReference type="Pfam" id="PF00238">
    <property type="entry name" value="Ribosomal_L14"/>
    <property type="match status" value="1"/>
</dbReference>
<dbReference type="SMART" id="SM01374">
    <property type="entry name" value="Ribosomal_L14"/>
    <property type="match status" value="1"/>
</dbReference>
<dbReference type="SUPFAM" id="SSF50193">
    <property type="entry name" value="Ribosomal protein L14"/>
    <property type="match status" value="1"/>
</dbReference>
<dbReference type="PROSITE" id="PS00049">
    <property type="entry name" value="RIBOSOMAL_L14"/>
    <property type="match status" value="1"/>
</dbReference>
<reference key="1">
    <citation type="journal article" date="2009" name="J. Bacteriol.">
        <title>Complete genome sequence of Erythrobacter litoralis HTCC2594.</title>
        <authorList>
            <person name="Oh H.M."/>
            <person name="Giovannoni S.J."/>
            <person name="Ferriera S."/>
            <person name="Johnson J."/>
            <person name="Cho J.C."/>
        </authorList>
    </citation>
    <scope>NUCLEOTIDE SEQUENCE [LARGE SCALE GENOMIC DNA]</scope>
    <source>
        <strain>HTCC2594</strain>
    </source>
</reference>
<sequence length="122" mass="13318">MIQMQSNLDVADNSGAKRVQCIKVLGGSKRRTASVGDVIVVSVKEAQPRAKVKKGDVHRAVIVRTKKDVRRPDGSVIRFDSNAAVLVSKNEEPIGTRIFGPVVRELRGRGFMKIISLAPEVL</sequence>
<proteinExistence type="inferred from homology"/>
<organism>
    <name type="scientific">Erythrobacter litoralis (strain HTCC2594)</name>
    <dbReference type="NCBI Taxonomy" id="314225"/>
    <lineage>
        <taxon>Bacteria</taxon>
        <taxon>Pseudomonadati</taxon>
        <taxon>Pseudomonadota</taxon>
        <taxon>Alphaproteobacteria</taxon>
        <taxon>Sphingomonadales</taxon>
        <taxon>Erythrobacteraceae</taxon>
        <taxon>Erythrobacter/Porphyrobacter group</taxon>
        <taxon>Erythrobacter</taxon>
    </lineage>
</organism>
<keyword id="KW-1185">Reference proteome</keyword>
<keyword id="KW-0687">Ribonucleoprotein</keyword>
<keyword id="KW-0689">Ribosomal protein</keyword>
<keyword id="KW-0694">RNA-binding</keyword>
<keyword id="KW-0699">rRNA-binding</keyword>
<accession>Q2N9C1</accession>
<evidence type="ECO:0000255" key="1">
    <source>
        <dbReference type="HAMAP-Rule" id="MF_01367"/>
    </source>
</evidence>
<evidence type="ECO:0000305" key="2"/>
<protein>
    <recommendedName>
        <fullName evidence="1">Large ribosomal subunit protein uL14</fullName>
    </recommendedName>
    <alternativeName>
        <fullName evidence="2">50S ribosomal protein L14</fullName>
    </alternativeName>
</protein>
<gene>
    <name evidence="1" type="primary">rplN</name>
    <name type="ordered locus">ELI_08140</name>
</gene>